<evidence type="ECO:0000255" key="1">
    <source>
        <dbReference type="HAMAP-Rule" id="MF_00364"/>
    </source>
</evidence>
<sequence length="335" mass="35294">MLLIGVAGTTLSAQEVDWLQDDAVAGVVLFKRNFASRAQIVELSAALREAAPRPLLLAVDQEGGRVQRFHEGYSALPPLQGIGALYVRDPEAALELAFEHAWLMASEVRASGVDLSFAPVVDLGRGNRAIGDRAFSDDPHVVAAFAKAYVQGMHAAGMPVTLKHFPGHGSVLEDTHVDLAVDVRALETLESEDLVPFAAGIAAGADAVMMAHVVYPNVAPEPAGFSAHWIEVILRGRMGFRGVVFSDDIGMAAVRGVGGVVGCVHAHLDAGCDVVLVCHPELVNDALSAVAGRRSNTAALIGLIGRGVLGWDGLLADVRYGSIQSHLFERFGTST</sequence>
<protein>
    <recommendedName>
        <fullName evidence="1">Beta-hexosaminidase</fullName>
        <ecNumber evidence="1">3.2.1.52</ecNumber>
    </recommendedName>
    <alternativeName>
        <fullName evidence="1">Beta-N-acetylhexosaminidase</fullName>
    </alternativeName>
    <alternativeName>
        <fullName evidence="1">N-acetyl-beta-glucosaminidase</fullName>
    </alternativeName>
</protein>
<comment type="function">
    <text evidence="1">Plays a role in peptidoglycan recycling by cleaving the terminal beta-1,4-linked N-acetylglucosamine (GlcNAc) from peptide-linked peptidoglycan fragments, giving rise to free GlcNAc, anhydro-N-acetylmuramic acid and anhydro-N-acetylmuramic acid-linked peptides.</text>
</comment>
<comment type="catalytic activity">
    <reaction evidence="1">
        <text>Hydrolysis of terminal non-reducing N-acetyl-D-hexosamine residues in N-acetyl-beta-D-hexosaminides.</text>
        <dbReference type="EC" id="3.2.1.52"/>
    </reaction>
</comment>
<comment type="pathway">
    <text evidence="1">Cell wall biogenesis; peptidoglycan recycling.</text>
</comment>
<comment type="subcellular location">
    <subcellularLocation>
        <location evidence="1">Cytoplasm</location>
    </subcellularLocation>
</comment>
<comment type="similarity">
    <text evidence="1">Belongs to the glycosyl hydrolase 3 family. NagZ subfamily.</text>
</comment>
<dbReference type="EC" id="3.2.1.52" evidence="1"/>
<dbReference type="EMBL" id="CP001011">
    <property type="protein sequence ID" value="ACB92879.1"/>
    <property type="molecule type" value="Genomic_DNA"/>
</dbReference>
<dbReference type="RefSeq" id="WP_004091030.1">
    <property type="nucleotide sequence ID" value="NC_010577.1"/>
</dbReference>
<dbReference type="SMR" id="B2I6G9"/>
<dbReference type="CAZy" id="GH3">
    <property type="family name" value="Glycoside Hydrolase Family 3"/>
</dbReference>
<dbReference type="GeneID" id="93905200"/>
<dbReference type="KEGG" id="xfn:XfasM23_1468"/>
<dbReference type="HOGENOM" id="CLU_008392_0_0_6"/>
<dbReference type="UniPathway" id="UPA00544"/>
<dbReference type="Proteomes" id="UP000001698">
    <property type="component" value="Chromosome"/>
</dbReference>
<dbReference type="GO" id="GO:0005737">
    <property type="term" value="C:cytoplasm"/>
    <property type="evidence" value="ECO:0007669"/>
    <property type="project" value="UniProtKB-SubCell"/>
</dbReference>
<dbReference type="GO" id="GO:0004563">
    <property type="term" value="F:beta-N-acetylhexosaminidase activity"/>
    <property type="evidence" value="ECO:0007669"/>
    <property type="project" value="UniProtKB-UniRule"/>
</dbReference>
<dbReference type="GO" id="GO:0005975">
    <property type="term" value="P:carbohydrate metabolic process"/>
    <property type="evidence" value="ECO:0007669"/>
    <property type="project" value="InterPro"/>
</dbReference>
<dbReference type="GO" id="GO:0051301">
    <property type="term" value="P:cell division"/>
    <property type="evidence" value="ECO:0007669"/>
    <property type="project" value="UniProtKB-KW"/>
</dbReference>
<dbReference type="GO" id="GO:0071555">
    <property type="term" value="P:cell wall organization"/>
    <property type="evidence" value="ECO:0007669"/>
    <property type="project" value="UniProtKB-KW"/>
</dbReference>
<dbReference type="GO" id="GO:0009252">
    <property type="term" value="P:peptidoglycan biosynthetic process"/>
    <property type="evidence" value="ECO:0007669"/>
    <property type="project" value="UniProtKB-KW"/>
</dbReference>
<dbReference type="GO" id="GO:0009254">
    <property type="term" value="P:peptidoglycan turnover"/>
    <property type="evidence" value="ECO:0007669"/>
    <property type="project" value="UniProtKB-UniRule"/>
</dbReference>
<dbReference type="GO" id="GO:0008360">
    <property type="term" value="P:regulation of cell shape"/>
    <property type="evidence" value="ECO:0007669"/>
    <property type="project" value="UniProtKB-KW"/>
</dbReference>
<dbReference type="Gene3D" id="3.20.20.300">
    <property type="entry name" value="Glycoside hydrolase, family 3, N-terminal domain"/>
    <property type="match status" value="1"/>
</dbReference>
<dbReference type="HAMAP" id="MF_00364">
    <property type="entry name" value="NagZ"/>
    <property type="match status" value="1"/>
</dbReference>
<dbReference type="InterPro" id="IPR022956">
    <property type="entry name" value="Beta_hexosaminidase_bac"/>
</dbReference>
<dbReference type="InterPro" id="IPR019800">
    <property type="entry name" value="Glyco_hydro_3_AS"/>
</dbReference>
<dbReference type="InterPro" id="IPR001764">
    <property type="entry name" value="Glyco_hydro_3_N"/>
</dbReference>
<dbReference type="InterPro" id="IPR036962">
    <property type="entry name" value="Glyco_hydro_3_N_sf"/>
</dbReference>
<dbReference type="InterPro" id="IPR017853">
    <property type="entry name" value="Glycoside_hydrolase_SF"/>
</dbReference>
<dbReference type="InterPro" id="IPR050226">
    <property type="entry name" value="NagZ_Beta-hexosaminidase"/>
</dbReference>
<dbReference type="NCBIfam" id="NF003740">
    <property type="entry name" value="PRK05337.1"/>
    <property type="match status" value="1"/>
</dbReference>
<dbReference type="PANTHER" id="PTHR30480:SF13">
    <property type="entry name" value="BETA-HEXOSAMINIDASE"/>
    <property type="match status" value="1"/>
</dbReference>
<dbReference type="PANTHER" id="PTHR30480">
    <property type="entry name" value="BETA-HEXOSAMINIDASE-RELATED"/>
    <property type="match status" value="1"/>
</dbReference>
<dbReference type="Pfam" id="PF00933">
    <property type="entry name" value="Glyco_hydro_3"/>
    <property type="match status" value="1"/>
</dbReference>
<dbReference type="SUPFAM" id="SSF51445">
    <property type="entry name" value="(Trans)glycosidases"/>
    <property type="match status" value="1"/>
</dbReference>
<dbReference type="PROSITE" id="PS00775">
    <property type="entry name" value="GLYCOSYL_HYDROL_F3"/>
    <property type="match status" value="1"/>
</dbReference>
<proteinExistence type="inferred from homology"/>
<name>NAGZ_XYLF2</name>
<keyword id="KW-0131">Cell cycle</keyword>
<keyword id="KW-0132">Cell division</keyword>
<keyword id="KW-0133">Cell shape</keyword>
<keyword id="KW-0961">Cell wall biogenesis/degradation</keyword>
<keyword id="KW-0963">Cytoplasm</keyword>
<keyword id="KW-0326">Glycosidase</keyword>
<keyword id="KW-0378">Hydrolase</keyword>
<keyword id="KW-0573">Peptidoglycan synthesis</keyword>
<gene>
    <name evidence="1" type="primary">nagZ</name>
    <name type="ordered locus">XfasM23_1468</name>
</gene>
<reference key="1">
    <citation type="journal article" date="2010" name="J. Bacteriol.">
        <title>Whole genome sequences of two Xylella fastidiosa strains (M12 and M23) causing almond leaf scorch disease in California.</title>
        <authorList>
            <person name="Chen J."/>
            <person name="Xie G."/>
            <person name="Han S."/>
            <person name="Chertkov O."/>
            <person name="Sims D."/>
            <person name="Civerolo E.L."/>
        </authorList>
    </citation>
    <scope>NUCLEOTIDE SEQUENCE [LARGE SCALE GENOMIC DNA]</scope>
    <source>
        <strain>M23</strain>
    </source>
</reference>
<feature type="chain" id="PRO_1000121078" description="Beta-hexosaminidase">
    <location>
        <begin position="1"/>
        <end position="335"/>
    </location>
</feature>
<feature type="active site" description="Proton donor/acceptor" evidence="1">
    <location>
        <position position="176"/>
    </location>
</feature>
<feature type="active site" description="Nucleophile" evidence="1">
    <location>
        <position position="247"/>
    </location>
</feature>
<feature type="binding site" evidence="1">
    <location>
        <position position="60"/>
    </location>
    <ligand>
        <name>substrate</name>
    </ligand>
</feature>
<feature type="binding site" evidence="1">
    <location>
        <position position="68"/>
    </location>
    <ligand>
        <name>substrate</name>
    </ligand>
</feature>
<feature type="binding site" evidence="1">
    <location>
        <position position="133"/>
    </location>
    <ligand>
        <name>substrate</name>
    </ligand>
</feature>
<feature type="binding site" evidence="1">
    <location>
        <begin position="163"/>
        <end position="164"/>
    </location>
    <ligand>
        <name>substrate</name>
    </ligand>
</feature>
<feature type="site" description="Important for catalytic activity" evidence="1">
    <location>
        <position position="174"/>
    </location>
</feature>
<accession>B2I6G9</accession>
<organism>
    <name type="scientific">Xylella fastidiosa (strain M23)</name>
    <dbReference type="NCBI Taxonomy" id="405441"/>
    <lineage>
        <taxon>Bacteria</taxon>
        <taxon>Pseudomonadati</taxon>
        <taxon>Pseudomonadota</taxon>
        <taxon>Gammaproteobacteria</taxon>
        <taxon>Lysobacterales</taxon>
        <taxon>Lysobacteraceae</taxon>
        <taxon>Xylella</taxon>
    </lineage>
</organism>